<name>QCR2_EUGGR</name>
<dbReference type="EMBL" id="D16672">
    <property type="protein sequence ID" value="BAA04080.1"/>
    <property type="molecule type" value="mRNA"/>
</dbReference>
<dbReference type="PIR" id="JX0301">
    <property type="entry name" value="JX0301"/>
</dbReference>
<dbReference type="PDB" id="8IUF">
    <property type="method" value="EM"/>
    <property type="resolution" value="2.81 A"/>
    <property type="chains" value="QB/Qb=1-474"/>
</dbReference>
<dbReference type="PDB" id="8IUJ">
    <property type="method" value="EM"/>
    <property type="resolution" value="3.06 A"/>
    <property type="chains" value="QB/Qb=1-474"/>
</dbReference>
<dbReference type="PDBsum" id="8IUF"/>
<dbReference type="PDBsum" id="8IUJ"/>
<dbReference type="EMDB" id="EMD-35720"/>
<dbReference type="EMDB" id="EMD-35723"/>
<dbReference type="SMR" id="P43265"/>
<dbReference type="GO" id="GO:0005743">
    <property type="term" value="C:mitochondrial inner membrane"/>
    <property type="evidence" value="ECO:0007669"/>
    <property type="project" value="UniProtKB-SubCell"/>
</dbReference>
<dbReference type="GO" id="GO:0046872">
    <property type="term" value="F:metal ion binding"/>
    <property type="evidence" value="ECO:0007669"/>
    <property type="project" value="InterPro"/>
</dbReference>
<dbReference type="Gene3D" id="3.30.830.10">
    <property type="entry name" value="Metalloenzyme, LuxS/M16 peptidase-like"/>
    <property type="match status" value="2"/>
</dbReference>
<dbReference type="InterPro" id="IPR011249">
    <property type="entry name" value="Metalloenz_LuxS/M16"/>
</dbReference>
<dbReference type="InterPro" id="IPR050361">
    <property type="entry name" value="MPP/UQCRC_Complex"/>
</dbReference>
<dbReference type="InterPro" id="IPR011765">
    <property type="entry name" value="Pept_M16_N"/>
</dbReference>
<dbReference type="PANTHER" id="PTHR11851">
    <property type="entry name" value="METALLOPROTEASE"/>
    <property type="match status" value="1"/>
</dbReference>
<dbReference type="PANTHER" id="PTHR11851:SF227">
    <property type="entry name" value="PROCESSING PEPTIDASE ALPHA SUBUNIT, PUTATIVE-RELATED"/>
    <property type="match status" value="1"/>
</dbReference>
<dbReference type="Pfam" id="PF00675">
    <property type="entry name" value="Peptidase_M16"/>
    <property type="match status" value="1"/>
</dbReference>
<dbReference type="SUPFAM" id="SSF63411">
    <property type="entry name" value="LuxS/MPP-like metallohydrolase"/>
    <property type="match status" value="2"/>
</dbReference>
<evidence type="ECO:0000250" key="1">
    <source>
        <dbReference type="UniProtKB" id="P07257"/>
    </source>
</evidence>
<evidence type="ECO:0000269" key="2">
    <source>
    </source>
</evidence>
<evidence type="ECO:0000305" key="3"/>
<sequence>MKSVVRSKGTQALFRRFSSALGDSINPNQVGVGDNVIRVNGRLFEVDKVQEKGLKTSVLDNGTKVITLDNGGSVAQLTFLYKDGPVYENIFNAGISSFMKHALTKDGLTSSEYITKTFLQKAGIIVHEPTVVNKSAIAFTVEGFRDTLAQPAVADKFWQSLLFPRFSPENVKEVKRLVELESKETKRDSPFAYLQDILHKTAFKGSPLGHTSFVPAYNLGYIDSNKLFDRWDAHYGFGNIAVIATNIEHEAVLAAITDSAWVARAHNKVGGVAAPASKYSGGEGYDVVHRAKEFDDQFTDVYSTYTAYAFKAPGRSNLKEHAASLVIAQALSNAVSPVLNTSFAPKRLEVFYQAYDTVGLIGLSSVQASNAQLKAFKAALSKIGTLSEADLAVHKSAALLTAYGNVESWRATQATLIDSFNTTGQPLSPLEIVSAIKAVSADTVKSVVATMLGSPATLVHHGDSPCAPTLDALQ</sequence>
<comment type="function">
    <text evidence="1">Component of the ubiquinol-cytochrome c oxidoreductase, a multisubunit transmembrane complex that is part of the mitochondrial electron transport chain which drives oxidative phosphorylation. The respiratory chain contains 3 multisubunit complexes succinate dehydrogenase (complex II, CII), ubiquinol-cytochrome c oxidoreductase (cytochrome b-c1 complex, complex III, CIII) and cytochrome c oxidase (complex IV, CIV), that cooperate to transfer electrons derived from NADH and succinate to molecular oxygen, creating an electrochemical gradient over the inner membrane that drives transmembrane transport and the ATP synthase. The cytochrome b-c1 complex catalyzes electron transfer from ubiquinol to cytochrome c, linking this redox reaction to translocation of protons across the mitochondrial inner membrane, with protons being carried across the membrane as hydrogens on the quinol. In the process called Q cycle, 2 protons are consumed from the matrix, 4 protons are released into the intermembrane space and 2 electrons are passed to cytochrome c.</text>
</comment>
<comment type="subunit">
    <text evidence="1">Component of the ubiquinol-cytochrome c oxidoreductase (cytochrome b-c1 complex, complex III, CIII), a multisubunit enzyme composed of 3 respiratory subunits cytochrome b, cytochrome c1 and Rieske protein, 2 core protein subunits, and additional low-molecular weight protein subunits. The complex exists as an obligatory dimer and forms supercomplexes (SCs) in the inner mitochondrial membrane with cytochrome c oxidase (complex IV, CIV).</text>
</comment>
<comment type="subcellular location">
    <subcellularLocation>
        <location evidence="1">Mitochondrion inner membrane</location>
        <topology evidence="1">Peripheral membrane protein</topology>
        <orientation evidence="1">Matrix side</orientation>
    </subcellularLocation>
</comment>
<comment type="similarity">
    <text evidence="3">Belongs to the peptidase M16 family. UQCRC2/QCR2 subfamily.</text>
</comment>
<comment type="caution">
    <text evidence="3">Does not seem to have protease activity as it lacks the zinc-binding site.</text>
</comment>
<protein>
    <recommendedName>
        <fullName>Ubiquinol-cytochrome-c reductase complex core protein 2, mitochondrial</fullName>
    </recommendedName>
</protein>
<reference key="1">
    <citation type="journal article" date="1994" name="J. Biochem.">
        <title>Molecular cloning and nucleotide sequences of cDNAs encoding subunits I, II, and IX of Euglena gracilis mitochondrial complex III.</title>
        <authorList>
            <person name="Cui J.-Y."/>
            <person name="Mukai K."/>
            <person name="Saeki K."/>
            <person name="Matsubara H."/>
        </authorList>
    </citation>
    <scope>NUCLEOTIDE SEQUENCE [MRNA]</scope>
    <scope>PROTEIN SEQUENCE OF 43-54</scope>
    <source>
        <strain>SM-ZK</strain>
    </source>
</reference>
<feature type="transit peptide" description="Mitochondrion" evidence="2">
    <location>
        <begin position="1"/>
        <end position="42"/>
    </location>
</feature>
<feature type="chain" id="PRO_0000026802" description="Ubiquinol-cytochrome-c reductase complex core protein 2, mitochondrial">
    <location>
        <begin position="43"/>
        <end position="474"/>
    </location>
</feature>
<keyword id="KW-0002">3D-structure</keyword>
<keyword id="KW-0903">Direct protein sequencing</keyword>
<keyword id="KW-0249">Electron transport</keyword>
<keyword id="KW-0472">Membrane</keyword>
<keyword id="KW-0496">Mitochondrion</keyword>
<keyword id="KW-0999">Mitochondrion inner membrane</keyword>
<keyword id="KW-0679">Respiratory chain</keyword>
<keyword id="KW-0809">Transit peptide</keyword>
<keyword id="KW-0813">Transport</keyword>
<accession>P43265</accession>
<proteinExistence type="evidence at protein level"/>
<organism>
    <name type="scientific">Euglena gracilis</name>
    <dbReference type="NCBI Taxonomy" id="3039"/>
    <lineage>
        <taxon>Eukaryota</taxon>
        <taxon>Discoba</taxon>
        <taxon>Euglenozoa</taxon>
        <taxon>Euglenida</taxon>
        <taxon>Spirocuta</taxon>
        <taxon>Euglenophyceae</taxon>
        <taxon>Euglenales</taxon>
        <taxon>Euglenaceae</taxon>
        <taxon>Euglena</taxon>
    </lineage>
</organism>